<gene>
    <name type="primary">CKS1</name>
    <name type="ORF">OsI_009771</name>
</gene>
<comment type="function">
    <text evidence="1">Binds to the catalytic subunit of the cyclin dependent kinases and is essential for their biological function.</text>
</comment>
<comment type="similarity">
    <text evidence="2">Belongs to the CKS family.</text>
</comment>
<feature type="chain" id="PRO_0000295671" description="Cyclin-dependent kinases regulatory subunit 1">
    <location>
        <begin position="1"/>
        <end position="90"/>
    </location>
</feature>
<keyword id="KW-0131">Cell cycle</keyword>
<keyword id="KW-0132">Cell division</keyword>
<keyword id="KW-1185">Reference proteome</keyword>
<sequence>MGQIQYSEKYFDDTYEYRHVVLPPEVAKLLPKNRLLSENEWRAIGVQQSRGWVHYAIHRPEPHIMLFRRPLNFQQQQEAAAAAAAQMLPK</sequence>
<evidence type="ECO:0000250" key="1"/>
<evidence type="ECO:0000305" key="2"/>
<name>CKS1_ORYSI</name>
<accession>A2XCH8</accession>
<reference key="1">
    <citation type="journal article" date="2005" name="PLoS Biol.">
        <title>The genomes of Oryza sativa: a history of duplications.</title>
        <authorList>
            <person name="Yu J."/>
            <person name="Wang J."/>
            <person name="Lin W."/>
            <person name="Li S."/>
            <person name="Li H."/>
            <person name="Zhou J."/>
            <person name="Ni P."/>
            <person name="Dong W."/>
            <person name="Hu S."/>
            <person name="Zeng C."/>
            <person name="Zhang J."/>
            <person name="Zhang Y."/>
            <person name="Li R."/>
            <person name="Xu Z."/>
            <person name="Li S."/>
            <person name="Li X."/>
            <person name="Zheng H."/>
            <person name="Cong L."/>
            <person name="Lin L."/>
            <person name="Yin J."/>
            <person name="Geng J."/>
            <person name="Li G."/>
            <person name="Shi J."/>
            <person name="Liu J."/>
            <person name="Lv H."/>
            <person name="Li J."/>
            <person name="Wang J."/>
            <person name="Deng Y."/>
            <person name="Ran L."/>
            <person name="Shi X."/>
            <person name="Wang X."/>
            <person name="Wu Q."/>
            <person name="Li C."/>
            <person name="Ren X."/>
            <person name="Wang J."/>
            <person name="Wang X."/>
            <person name="Li D."/>
            <person name="Liu D."/>
            <person name="Zhang X."/>
            <person name="Ji Z."/>
            <person name="Zhao W."/>
            <person name="Sun Y."/>
            <person name="Zhang Z."/>
            <person name="Bao J."/>
            <person name="Han Y."/>
            <person name="Dong L."/>
            <person name="Ji J."/>
            <person name="Chen P."/>
            <person name="Wu S."/>
            <person name="Liu J."/>
            <person name="Xiao Y."/>
            <person name="Bu D."/>
            <person name="Tan J."/>
            <person name="Yang L."/>
            <person name="Ye C."/>
            <person name="Zhang J."/>
            <person name="Xu J."/>
            <person name="Zhou Y."/>
            <person name="Yu Y."/>
            <person name="Zhang B."/>
            <person name="Zhuang S."/>
            <person name="Wei H."/>
            <person name="Liu B."/>
            <person name="Lei M."/>
            <person name="Yu H."/>
            <person name="Li Y."/>
            <person name="Xu H."/>
            <person name="Wei S."/>
            <person name="He X."/>
            <person name="Fang L."/>
            <person name="Zhang Z."/>
            <person name="Zhang Y."/>
            <person name="Huang X."/>
            <person name="Su Z."/>
            <person name="Tong W."/>
            <person name="Li J."/>
            <person name="Tong Z."/>
            <person name="Li S."/>
            <person name="Ye J."/>
            <person name="Wang L."/>
            <person name="Fang L."/>
            <person name="Lei T."/>
            <person name="Chen C.-S."/>
            <person name="Chen H.-C."/>
            <person name="Xu Z."/>
            <person name="Li H."/>
            <person name="Huang H."/>
            <person name="Zhang F."/>
            <person name="Xu H."/>
            <person name="Li N."/>
            <person name="Zhao C."/>
            <person name="Li S."/>
            <person name="Dong L."/>
            <person name="Huang Y."/>
            <person name="Li L."/>
            <person name="Xi Y."/>
            <person name="Qi Q."/>
            <person name="Li W."/>
            <person name="Zhang B."/>
            <person name="Hu W."/>
            <person name="Zhang Y."/>
            <person name="Tian X."/>
            <person name="Jiao Y."/>
            <person name="Liang X."/>
            <person name="Jin J."/>
            <person name="Gao L."/>
            <person name="Zheng W."/>
            <person name="Hao B."/>
            <person name="Liu S.-M."/>
            <person name="Wang W."/>
            <person name="Yuan L."/>
            <person name="Cao M."/>
            <person name="McDermott J."/>
            <person name="Samudrala R."/>
            <person name="Wang J."/>
            <person name="Wong G.K.-S."/>
            <person name="Yang H."/>
        </authorList>
    </citation>
    <scope>NUCLEOTIDE SEQUENCE [LARGE SCALE GENOMIC DNA]</scope>
    <source>
        <strain>cv. 93-11</strain>
    </source>
</reference>
<organism>
    <name type="scientific">Oryza sativa subsp. indica</name>
    <name type="common">Rice</name>
    <dbReference type="NCBI Taxonomy" id="39946"/>
    <lineage>
        <taxon>Eukaryota</taxon>
        <taxon>Viridiplantae</taxon>
        <taxon>Streptophyta</taxon>
        <taxon>Embryophyta</taxon>
        <taxon>Tracheophyta</taxon>
        <taxon>Spermatophyta</taxon>
        <taxon>Magnoliopsida</taxon>
        <taxon>Liliopsida</taxon>
        <taxon>Poales</taxon>
        <taxon>Poaceae</taxon>
        <taxon>BOP clade</taxon>
        <taxon>Oryzoideae</taxon>
        <taxon>Oryzeae</taxon>
        <taxon>Oryzinae</taxon>
        <taxon>Oryza</taxon>
        <taxon>Oryza sativa</taxon>
    </lineage>
</organism>
<proteinExistence type="evidence at transcript level"/>
<protein>
    <recommendedName>
        <fullName>Cyclin-dependent kinases regulatory subunit 1</fullName>
    </recommendedName>
</protein>
<dbReference type="EMBL" id="CM000128">
    <property type="protein sequence ID" value="EAY88538.1"/>
    <property type="molecule type" value="Genomic_DNA"/>
</dbReference>
<dbReference type="SMR" id="A2XCH8"/>
<dbReference type="STRING" id="39946.A2XCH8"/>
<dbReference type="EnsemblPlants" id="BGIOSGA011858-TA">
    <property type="protein sequence ID" value="BGIOSGA011858-PA"/>
    <property type="gene ID" value="BGIOSGA011858"/>
</dbReference>
<dbReference type="EnsemblPlants" id="OsGoSa_03g0003570.01">
    <property type="protein sequence ID" value="OsGoSa_03g0003570.01"/>
    <property type="gene ID" value="OsGoSa_03g0003570"/>
</dbReference>
<dbReference type="EnsemblPlants" id="OsIR64_03g0003530.01">
    <property type="protein sequence ID" value="OsIR64_03g0003530.01"/>
    <property type="gene ID" value="OsIR64_03g0003530"/>
</dbReference>
<dbReference type="EnsemblPlants" id="OsKYG_03g0003610.01">
    <property type="protein sequence ID" value="OsKYG_03g0003610.01"/>
    <property type="gene ID" value="OsKYG_03g0003610"/>
</dbReference>
<dbReference type="EnsemblPlants" id="OsLaMu_03g0003620.01">
    <property type="protein sequence ID" value="OsLaMu_03g0003620.01"/>
    <property type="gene ID" value="OsLaMu_03g0003620"/>
</dbReference>
<dbReference type="EnsemblPlants" id="OsLima_03g0003640.01">
    <property type="protein sequence ID" value="OsLima_03g0003640.01"/>
    <property type="gene ID" value="OsLima_03g0003640"/>
</dbReference>
<dbReference type="EnsemblPlants" id="OsLiXu_03g0003640.01">
    <property type="protein sequence ID" value="OsLiXu_03g0003640.01"/>
    <property type="gene ID" value="OsLiXu_03g0003640"/>
</dbReference>
<dbReference type="EnsemblPlants" id="OsMH63_03G003570_01">
    <property type="protein sequence ID" value="OsMH63_03G003570_01"/>
    <property type="gene ID" value="OsMH63_03G003570"/>
</dbReference>
<dbReference type="EnsemblPlants" id="OsPr106_03g0003640.01">
    <property type="protein sequence ID" value="OsPr106_03g0003640.01"/>
    <property type="gene ID" value="OsPr106_03g0003640"/>
</dbReference>
<dbReference type="EnsemblPlants" id="OsZS97_03G003490_01">
    <property type="protein sequence ID" value="OsZS97_03G003490_01"/>
    <property type="gene ID" value="OsZS97_03G003490"/>
</dbReference>
<dbReference type="Gramene" id="BGIOSGA011858-TA">
    <property type="protein sequence ID" value="BGIOSGA011858-PA"/>
    <property type="gene ID" value="BGIOSGA011858"/>
</dbReference>
<dbReference type="Gramene" id="OsGoSa_03g0003570.01">
    <property type="protein sequence ID" value="OsGoSa_03g0003570.01"/>
    <property type="gene ID" value="OsGoSa_03g0003570"/>
</dbReference>
<dbReference type="Gramene" id="OsIR64_03g0003530.01">
    <property type="protein sequence ID" value="OsIR64_03g0003530.01"/>
    <property type="gene ID" value="OsIR64_03g0003530"/>
</dbReference>
<dbReference type="Gramene" id="OsKYG_03g0003610.01">
    <property type="protein sequence ID" value="OsKYG_03g0003610.01"/>
    <property type="gene ID" value="OsKYG_03g0003610"/>
</dbReference>
<dbReference type="Gramene" id="OsLaMu_03g0003620.01">
    <property type="protein sequence ID" value="OsLaMu_03g0003620.01"/>
    <property type="gene ID" value="OsLaMu_03g0003620"/>
</dbReference>
<dbReference type="Gramene" id="OsLima_03g0003640.01">
    <property type="protein sequence ID" value="OsLima_03g0003640.01"/>
    <property type="gene ID" value="OsLima_03g0003640"/>
</dbReference>
<dbReference type="Gramene" id="OsLiXu_03g0003640.01">
    <property type="protein sequence ID" value="OsLiXu_03g0003640.01"/>
    <property type="gene ID" value="OsLiXu_03g0003640"/>
</dbReference>
<dbReference type="Gramene" id="OsMH63_03G003570_01">
    <property type="protein sequence ID" value="OsMH63_03G003570_01"/>
    <property type="gene ID" value="OsMH63_03G003570"/>
</dbReference>
<dbReference type="Gramene" id="OsPr106_03g0003640.01">
    <property type="protein sequence ID" value="OsPr106_03g0003640.01"/>
    <property type="gene ID" value="OsPr106_03g0003640"/>
</dbReference>
<dbReference type="Gramene" id="OsZS97_03G003490_01">
    <property type="protein sequence ID" value="OsZS97_03G003490_01"/>
    <property type="gene ID" value="OsZS97_03G003490"/>
</dbReference>
<dbReference type="HOGENOM" id="CLU_140546_2_0_1"/>
<dbReference type="OMA" id="RPINYGQ"/>
<dbReference type="OrthoDB" id="440676at2759"/>
<dbReference type="Proteomes" id="UP000007015">
    <property type="component" value="Chromosome 3"/>
</dbReference>
<dbReference type="GO" id="GO:0016538">
    <property type="term" value="F:cyclin-dependent protein serine/threonine kinase regulator activity"/>
    <property type="evidence" value="ECO:0007669"/>
    <property type="project" value="InterPro"/>
</dbReference>
<dbReference type="GO" id="GO:0051301">
    <property type="term" value="P:cell division"/>
    <property type="evidence" value="ECO:0007669"/>
    <property type="project" value="UniProtKB-KW"/>
</dbReference>
<dbReference type="FunFam" id="3.30.170.10:FF:000003">
    <property type="entry name" value="Cyclin-dependent kinases regulatory subunit"/>
    <property type="match status" value="1"/>
</dbReference>
<dbReference type="Gene3D" id="3.30.170.10">
    <property type="entry name" value="Cyclin-dependent kinase, regulatory subunit"/>
    <property type="match status" value="1"/>
</dbReference>
<dbReference type="InterPro" id="IPR000789">
    <property type="entry name" value="Cyclin-dep_kinase_reg-sub"/>
</dbReference>
<dbReference type="InterPro" id="IPR036858">
    <property type="entry name" value="Cyclin-dep_kinase_reg-sub_sf"/>
</dbReference>
<dbReference type="PANTHER" id="PTHR23415">
    <property type="entry name" value="CYCLIN-DEPENDENT KINASES REGULATORY SUBUNIT/60S RIBOSOME SUBUNIT BIOGENESIS PROTEIN NIP7"/>
    <property type="match status" value="1"/>
</dbReference>
<dbReference type="Pfam" id="PF01111">
    <property type="entry name" value="CKS"/>
    <property type="match status" value="1"/>
</dbReference>
<dbReference type="PRINTS" id="PR00296">
    <property type="entry name" value="CYCLINKINASE"/>
</dbReference>
<dbReference type="SMART" id="SM01084">
    <property type="entry name" value="CKS"/>
    <property type="match status" value="1"/>
</dbReference>
<dbReference type="SUPFAM" id="SSF55637">
    <property type="entry name" value="Cell cycle regulatory proteins"/>
    <property type="match status" value="1"/>
</dbReference>
<dbReference type="PROSITE" id="PS00944">
    <property type="entry name" value="CKS_1"/>
    <property type="match status" value="1"/>
</dbReference>